<sequence>MMEKGIWKDALIQSTKKLSPKLQVKNPVMLLVYVGAILATSLYFLGFFGISDEKSGYTLAIALILWFTVLFANFAEAIAEGRGRAQADSLKMARKDVLARKLKNIDDKTDVIEIASNDLKKGDIVYVLANEQIPMDGEVIEGAASVDESAITGESAPVIRESGGDRSAVTGGTTLVSDWLVVRVTAVSGESFLDKMIAMVEGASRKKTPNEIALQILLVTLSIIFLAVSATLLPFTEFASKQAGAGSAISITNVIALLVCLAPTTIGALLSSIGIAGMSRLNQANVLAMSGRAIEAAGDVDVLLLDKTGTITLGNRKASEFLPVDGVTEQELADAAQLSSIADETAEGRSIVVLAKERFDIRGRDFAEMHAEFVPFTATTRMSGIDYQENTIRKGAADAVRAYVTANGGTYPKECDAIVSKVAGAGGTPLVVVRNNKVLGVIYLKDIVKNGVKERFLDLRKMGIKTIMITGDNPMTAAAIAAEAGVDDFLAEATPEAKLELIREYQREGHLVAMTGDGTNDAPALAQADVAVAMNTGTQAAKEAGNMVDLDSSPTKLIDIVRIGKQLLMTRGALTTFSVANDLAKYFAIIPVLFYGIFPQLEALNLMGLTSPTSAILSAIIYNAVIIIILIPLSLKGVKYREMPAGKLLSRNMLIYGLGGLIAPFIAIKLIDMLLTVLGIV</sequence>
<accession>Q71W90</accession>
<proteinExistence type="inferred from homology"/>
<protein>
    <recommendedName>
        <fullName evidence="1">Potassium-transporting ATPase ATP-binding subunit</fullName>
        <ecNumber evidence="1">7.2.2.6</ecNumber>
    </recommendedName>
    <alternativeName>
        <fullName evidence="1">ATP phosphohydrolase [potassium-transporting] B chain</fullName>
    </alternativeName>
    <alternativeName>
        <fullName evidence="1">Potassium-binding and translocating subunit B</fullName>
    </alternativeName>
    <alternativeName>
        <fullName evidence="1">Potassium-translocating ATPase B chain</fullName>
    </alternativeName>
</protein>
<reference key="1">
    <citation type="journal article" date="2004" name="Nucleic Acids Res.">
        <title>Whole genome comparisons of serotype 4b and 1/2a strains of the food-borne pathogen Listeria monocytogenes reveal new insights into the core genome components of this species.</title>
        <authorList>
            <person name="Nelson K.E."/>
            <person name="Fouts D.E."/>
            <person name="Mongodin E.F."/>
            <person name="Ravel J."/>
            <person name="DeBoy R.T."/>
            <person name="Kolonay J.F."/>
            <person name="Rasko D.A."/>
            <person name="Angiuoli S.V."/>
            <person name="Gill S.R."/>
            <person name="Paulsen I.T."/>
            <person name="Peterson J.D."/>
            <person name="White O."/>
            <person name="Nelson W.C."/>
            <person name="Nierman W.C."/>
            <person name="Beanan M.J."/>
            <person name="Brinkac L.M."/>
            <person name="Daugherty S.C."/>
            <person name="Dodson R.J."/>
            <person name="Durkin A.S."/>
            <person name="Madupu R."/>
            <person name="Haft D.H."/>
            <person name="Selengut J."/>
            <person name="Van Aken S.E."/>
            <person name="Khouri H.M."/>
            <person name="Fedorova N."/>
            <person name="Forberger H.A."/>
            <person name="Tran B."/>
            <person name="Kathariou S."/>
            <person name="Wonderling L.D."/>
            <person name="Uhlich G.A."/>
            <person name="Bayles D.O."/>
            <person name="Luchansky J.B."/>
            <person name="Fraser C.M."/>
        </authorList>
    </citation>
    <scope>NUCLEOTIDE SEQUENCE [LARGE SCALE GENOMIC DNA]</scope>
    <source>
        <strain>F2365</strain>
    </source>
</reference>
<evidence type="ECO:0000255" key="1">
    <source>
        <dbReference type="HAMAP-Rule" id="MF_00285"/>
    </source>
</evidence>
<organism>
    <name type="scientific">Listeria monocytogenes serotype 4b (strain F2365)</name>
    <dbReference type="NCBI Taxonomy" id="265669"/>
    <lineage>
        <taxon>Bacteria</taxon>
        <taxon>Bacillati</taxon>
        <taxon>Bacillota</taxon>
        <taxon>Bacilli</taxon>
        <taxon>Bacillales</taxon>
        <taxon>Listeriaceae</taxon>
        <taxon>Listeria</taxon>
    </lineage>
</organism>
<name>KDPB_LISMF</name>
<feature type="chain" id="PRO_0000046123" description="Potassium-transporting ATPase ATP-binding subunit">
    <location>
        <begin position="1"/>
        <end position="681"/>
    </location>
</feature>
<feature type="transmembrane region" description="Helical" evidence="1">
    <location>
        <begin position="30"/>
        <end position="50"/>
    </location>
</feature>
<feature type="transmembrane region" description="Helical" evidence="1">
    <location>
        <begin position="59"/>
        <end position="79"/>
    </location>
</feature>
<feature type="transmembrane region" description="Helical" evidence="1">
    <location>
        <begin position="216"/>
        <end position="236"/>
    </location>
</feature>
<feature type="transmembrane region" description="Helical" evidence="1">
    <location>
        <begin position="255"/>
        <end position="275"/>
    </location>
</feature>
<feature type="transmembrane region" description="Helical" evidence="1">
    <location>
        <begin position="587"/>
        <end position="607"/>
    </location>
</feature>
<feature type="transmembrane region" description="Helical" evidence="1">
    <location>
        <begin position="615"/>
        <end position="635"/>
    </location>
</feature>
<feature type="transmembrane region" description="Helical" evidence="1">
    <location>
        <begin position="661"/>
        <end position="681"/>
    </location>
</feature>
<feature type="active site" description="4-aspartylphosphate intermediate" evidence="1">
    <location>
        <position position="306"/>
    </location>
</feature>
<feature type="binding site" evidence="1">
    <location>
        <position position="343"/>
    </location>
    <ligand>
        <name>ATP</name>
        <dbReference type="ChEBI" id="CHEBI:30616"/>
    </ligand>
</feature>
<feature type="binding site" evidence="1">
    <location>
        <position position="347"/>
    </location>
    <ligand>
        <name>ATP</name>
        <dbReference type="ChEBI" id="CHEBI:30616"/>
    </ligand>
</feature>
<feature type="binding site" evidence="1">
    <location>
        <begin position="376"/>
        <end position="383"/>
    </location>
    <ligand>
        <name>ATP</name>
        <dbReference type="ChEBI" id="CHEBI:30616"/>
    </ligand>
</feature>
<feature type="binding site" evidence="1">
    <location>
        <position position="394"/>
    </location>
    <ligand>
        <name>ATP</name>
        <dbReference type="ChEBI" id="CHEBI:30616"/>
    </ligand>
</feature>
<feature type="binding site" evidence="1">
    <location>
        <position position="517"/>
    </location>
    <ligand>
        <name>Mg(2+)</name>
        <dbReference type="ChEBI" id="CHEBI:18420"/>
    </ligand>
</feature>
<feature type="binding site" evidence="1">
    <location>
        <position position="521"/>
    </location>
    <ligand>
        <name>Mg(2+)</name>
        <dbReference type="ChEBI" id="CHEBI:18420"/>
    </ligand>
</feature>
<comment type="function">
    <text evidence="1">Part of the high-affinity ATP-driven potassium transport (or Kdp) system, which catalyzes the hydrolysis of ATP coupled with the electrogenic transport of potassium into the cytoplasm. This subunit is responsible for energy coupling to the transport system and for the release of the potassium ions to the cytoplasm.</text>
</comment>
<comment type="catalytic activity">
    <reaction evidence="1">
        <text>K(+)(out) + ATP + H2O = K(+)(in) + ADP + phosphate + H(+)</text>
        <dbReference type="Rhea" id="RHEA:16777"/>
        <dbReference type="ChEBI" id="CHEBI:15377"/>
        <dbReference type="ChEBI" id="CHEBI:15378"/>
        <dbReference type="ChEBI" id="CHEBI:29103"/>
        <dbReference type="ChEBI" id="CHEBI:30616"/>
        <dbReference type="ChEBI" id="CHEBI:43474"/>
        <dbReference type="ChEBI" id="CHEBI:456216"/>
        <dbReference type="EC" id="7.2.2.6"/>
    </reaction>
    <physiologicalReaction direction="left-to-right" evidence="1">
        <dbReference type="Rhea" id="RHEA:16778"/>
    </physiologicalReaction>
</comment>
<comment type="subunit">
    <text evidence="1">The system is composed of three essential subunits: KdpA, KdpB and KdpC.</text>
</comment>
<comment type="subcellular location">
    <subcellularLocation>
        <location evidence="1">Cell membrane</location>
        <topology evidence="1">Multi-pass membrane protein</topology>
    </subcellularLocation>
</comment>
<comment type="similarity">
    <text evidence="1">Belongs to the cation transport ATPase (P-type) (TC 3.A.3) family. Type IA subfamily.</text>
</comment>
<dbReference type="EC" id="7.2.2.6" evidence="1"/>
<dbReference type="EMBL" id="AE017262">
    <property type="protein sequence ID" value="AAT05426.1"/>
    <property type="molecule type" value="Genomic_DNA"/>
</dbReference>
<dbReference type="RefSeq" id="WP_003727672.1">
    <property type="nucleotide sequence ID" value="NC_002973.6"/>
</dbReference>
<dbReference type="SMR" id="Q71W90"/>
<dbReference type="KEGG" id="lmf:LMOf2365_2661"/>
<dbReference type="HOGENOM" id="CLU_025728_2_0_9"/>
<dbReference type="GO" id="GO:0005886">
    <property type="term" value="C:plasma membrane"/>
    <property type="evidence" value="ECO:0007669"/>
    <property type="project" value="UniProtKB-SubCell"/>
</dbReference>
<dbReference type="GO" id="GO:0005524">
    <property type="term" value="F:ATP binding"/>
    <property type="evidence" value="ECO:0007669"/>
    <property type="project" value="UniProtKB-UniRule"/>
</dbReference>
<dbReference type="GO" id="GO:0016887">
    <property type="term" value="F:ATP hydrolysis activity"/>
    <property type="evidence" value="ECO:0007669"/>
    <property type="project" value="InterPro"/>
</dbReference>
<dbReference type="GO" id="GO:0000287">
    <property type="term" value="F:magnesium ion binding"/>
    <property type="evidence" value="ECO:0007669"/>
    <property type="project" value="UniProtKB-UniRule"/>
</dbReference>
<dbReference type="GO" id="GO:0008556">
    <property type="term" value="F:P-type potassium transmembrane transporter activity"/>
    <property type="evidence" value="ECO:0007669"/>
    <property type="project" value="UniProtKB-UniRule"/>
</dbReference>
<dbReference type="CDD" id="cd02078">
    <property type="entry name" value="P-type_ATPase_K"/>
    <property type="match status" value="1"/>
</dbReference>
<dbReference type="FunFam" id="2.70.150.10:FF:000010">
    <property type="entry name" value="Potassium-transporting ATPase ATP-binding subunit"/>
    <property type="match status" value="1"/>
</dbReference>
<dbReference type="FunFam" id="3.40.1110.10:FF:000007">
    <property type="entry name" value="Potassium-transporting ATPase ATP-binding subunit"/>
    <property type="match status" value="1"/>
</dbReference>
<dbReference type="Gene3D" id="3.40.1110.10">
    <property type="entry name" value="Calcium-transporting ATPase, cytoplasmic domain N"/>
    <property type="match status" value="1"/>
</dbReference>
<dbReference type="Gene3D" id="2.70.150.10">
    <property type="entry name" value="Calcium-transporting ATPase, cytoplasmic transduction domain A"/>
    <property type="match status" value="1"/>
</dbReference>
<dbReference type="Gene3D" id="3.40.50.1000">
    <property type="entry name" value="HAD superfamily/HAD-like"/>
    <property type="match status" value="1"/>
</dbReference>
<dbReference type="HAMAP" id="MF_00285">
    <property type="entry name" value="KdpB"/>
    <property type="match status" value="1"/>
</dbReference>
<dbReference type="InterPro" id="IPR023299">
    <property type="entry name" value="ATPase_P-typ_cyto_dom_N"/>
</dbReference>
<dbReference type="InterPro" id="IPR018303">
    <property type="entry name" value="ATPase_P-typ_P_site"/>
</dbReference>
<dbReference type="InterPro" id="IPR023298">
    <property type="entry name" value="ATPase_P-typ_TM_dom_sf"/>
</dbReference>
<dbReference type="InterPro" id="IPR008250">
    <property type="entry name" value="ATPase_P-typ_transduc_dom_A_sf"/>
</dbReference>
<dbReference type="InterPro" id="IPR036412">
    <property type="entry name" value="HAD-like_sf"/>
</dbReference>
<dbReference type="InterPro" id="IPR023214">
    <property type="entry name" value="HAD_sf"/>
</dbReference>
<dbReference type="InterPro" id="IPR006391">
    <property type="entry name" value="P-type_ATPase_bsu_IA"/>
</dbReference>
<dbReference type="InterPro" id="IPR001757">
    <property type="entry name" value="P_typ_ATPase"/>
</dbReference>
<dbReference type="InterPro" id="IPR044492">
    <property type="entry name" value="P_typ_ATPase_HD_dom"/>
</dbReference>
<dbReference type="NCBIfam" id="TIGR01494">
    <property type="entry name" value="ATPase_P-type"/>
    <property type="match status" value="2"/>
</dbReference>
<dbReference type="NCBIfam" id="TIGR01497">
    <property type="entry name" value="kdpB"/>
    <property type="match status" value="1"/>
</dbReference>
<dbReference type="PANTHER" id="PTHR43743">
    <property type="entry name" value="POTASSIUM-TRANSPORTING ATPASE ATP-BINDING SUBUNIT"/>
    <property type="match status" value="1"/>
</dbReference>
<dbReference type="PANTHER" id="PTHR43743:SF1">
    <property type="entry name" value="POTASSIUM-TRANSPORTING ATPASE ATP-BINDING SUBUNIT"/>
    <property type="match status" value="1"/>
</dbReference>
<dbReference type="Pfam" id="PF00122">
    <property type="entry name" value="E1-E2_ATPase"/>
    <property type="match status" value="1"/>
</dbReference>
<dbReference type="Pfam" id="PF00702">
    <property type="entry name" value="Hydrolase"/>
    <property type="match status" value="1"/>
</dbReference>
<dbReference type="PRINTS" id="PR00119">
    <property type="entry name" value="CATATPASE"/>
</dbReference>
<dbReference type="PRINTS" id="PR00120">
    <property type="entry name" value="HATPASE"/>
</dbReference>
<dbReference type="SFLD" id="SFLDS00003">
    <property type="entry name" value="Haloacid_Dehalogenase"/>
    <property type="match status" value="1"/>
</dbReference>
<dbReference type="SFLD" id="SFLDF00027">
    <property type="entry name" value="p-type_atpase"/>
    <property type="match status" value="1"/>
</dbReference>
<dbReference type="SUPFAM" id="SSF81653">
    <property type="entry name" value="Calcium ATPase, transduction domain A"/>
    <property type="match status" value="1"/>
</dbReference>
<dbReference type="SUPFAM" id="SSF81665">
    <property type="entry name" value="Calcium ATPase, transmembrane domain M"/>
    <property type="match status" value="1"/>
</dbReference>
<dbReference type="SUPFAM" id="SSF56784">
    <property type="entry name" value="HAD-like"/>
    <property type="match status" value="1"/>
</dbReference>
<dbReference type="SUPFAM" id="SSF81660">
    <property type="entry name" value="Metal cation-transporting ATPase, ATP-binding domain N"/>
    <property type="match status" value="1"/>
</dbReference>
<dbReference type="PROSITE" id="PS00154">
    <property type="entry name" value="ATPASE_E1_E2"/>
    <property type="match status" value="1"/>
</dbReference>
<keyword id="KW-0067">ATP-binding</keyword>
<keyword id="KW-1003">Cell membrane</keyword>
<keyword id="KW-0406">Ion transport</keyword>
<keyword id="KW-0460">Magnesium</keyword>
<keyword id="KW-0472">Membrane</keyword>
<keyword id="KW-0479">Metal-binding</keyword>
<keyword id="KW-0547">Nucleotide-binding</keyword>
<keyword id="KW-0597">Phosphoprotein</keyword>
<keyword id="KW-0630">Potassium</keyword>
<keyword id="KW-0633">Potassium transport</keyword>
<keyword id="KW-1278">Translocase</keyword>
<keyword id="KW-0812">Transmembrane</keyword>
<keyword id="KW-1133">Transmembrane helix</keyword>
<keyword id="KW-0813">Transport</keyword>
<gene>
    <name evidence="1" type="primary">kdpB</name>
    <name type="ordered locus">LMOf2365_2661</name>
</gene>